<protein>
    <recommendedName>
        <fullName>Pro-vaccinia growth factor</fullName>
        <shortName>Pro-VGF</shortName>
    </recommendedName>
    <component>
        <recommendedName>
            <fullName>Vaccinia growth factor</fullName>
            <shortName>VGF</shortName>
        </recommendedName>
        <alternativeName>
            <fullName>Secreted epidermal growth factor-like</fullName>
        </alternativeName>
    </component>
</protein>
<organismHost>
    <name type="scientific">Homo sapiens</name>
    <name type="common">Human</name>
    <dbReference type="NCBI Taxonomy" id="9606"/>
</organismHost>
<dbReference type="EMBL" id="AF095689">
    <property type="protein sequence ID" value="AAF33857.1"/>
    <property type="molecule type" value="Genomic_DNA"/>
</dbReference>
<dbReference type="SMR" id="Q9JFH4"/>
<dbReference type="GlyCosmos" id="Q9JFH4">
    <property type="glycosylation" value="2 sites, No reported glycans"/>
</dbReference>
<dbReference type="Proteomes" id="UP000163220">
    <property type="component" value="Genome"/>
</dbReference>
<dbReference type="GO" id="GO:0005615">
    <property type="term" value="C:extracellular space"/>
    <property type="evidence" value="ECO:0007669"/>
    <property type="project" value="TreeGrafter"/>
</dbReference>
<dbReference type="GO" id="GO:0033644">
    <property type="term" value="C:host cell membrane"/>
    <property type="evidence" value="ECO:0007669"/>
    <property type="project" value="UniProtKB-SubCell"/>
</dbReference>
<dbReference type="GO" id="GO:0016020">
    <property type="term" value="C:membrane"/>
    <property type="evidence" value="ECO:0007669"/>
    <property type="project" value="UniProtKB-KW"/>
</dbReference>
<dbReference type="GO" id="GO:0005154">
    <property type="term" value="F:epidermal growth factor receptor binding"/>
    <property type="evidence" value="ECO:0007669"/>
    <property type="project" value="InterPro"/>
</dbReference>
<dbReference type="GO" id="GO:0008083">
    <property type="term" value="F:growth factor activity"/>
    <property type="evidence" value="ECO:0007669"/>
    <property type="project" value="UniProtKB-KW"/>
</dbReference>
<dbReference type="GO" id="GO:0007173">
    <property type="term" value="P:epidermal growth factor receptor signaling pathway"/>
    <property type="evidence" value="ECO:0007669"/>
    <property type="project" value="TreeGrafter"/>
</dbReference>
<dbReference type="GO" id="GO:0008284">
    <property type="term" value="P:positive regulation of cell population proliferation"/>
    <property type="evidence" value="ECO:0007669"/>
    <property type="project" value="TreeGrafter"/>
</dbReference>
<dbReference type="GO" id="GO:0045840">
    <property type="term" value="P:positive regulation of mitotic nuclear division"/>
    <property type="evidence" value="ECO:0007669"/>
    <property type="project" value="TreeGrafter"/>
</dbReference>
<dbReference type="Gene3D" id="2.10.25.10">
    <property type="entry name" value="Laminin"/>
    <property type="match status" value="1"/>
</dbReference>
<dbReference type="InterPro" id="IPR000742">
    <property type="entry name" value="EGF-like_dom"/>
</dbReference>
<dbReference type="InterPro" id="IPR011170">
    <property type="entry name" value="GF_C11R"/>
</dbReference>
<dbReference type="PANTHER" id="PTHR10740:SF11">
    <property type="entry name" value="PROEPIREGULIN"/>
    <property type="match status" value="1"/>
</dbReference>
<dbReference type="PANTHER" id="PTHR10740">
    <property type="entry name" value="TRANSFORMING GROWTH FACTOR ALPHA"/>
    <property type="match status" value="1"/>
</dbReference>
<dbReference type="PIRSF" id="PIRSF001779">
    <property type="entry name" value="GF_C11R"/>
    <property type="match status" value="1"/>
</dbReference>
<dbReference type="PRINTS" id="PR00009">
    <property type="entry name" value="EGFTGF"/>
</dbReference>
<dbReference type="SUPFAM" id="SSF57196">
    <property type="entry name" value="EGF/Laminin"/>
    <property type="match status" value="1"/>
</dbReference>
<dbReference type="PROSITE" id="PS00022">
    <property type="entry name" value="EGF_1"/>
    <property type="match status" value="1"/>
</dbReference>
<dbReference type="PROSITE" id="PS01186">
    <property type="entry name" value="EGF_2"/>
    <property type="match status" value="1"/>
</dbReference>
<dbReference type="PROSITE" id="PS50026">
    <property type="entry name" value="EGF_3"/>
    <property type="match status" value="1"/>
</dbReference>
<accession>Q9JFH4</accession>
<gene>
    <name type="primary">OPG019</name>
    <name type="ORF">TC18R</name>
</gene>
<keyword id="KW-1015">Disulfide bond</keyword>
<keyword id="KW-0244">Early protein</keyword>
<keyword id="KW-0245">EGF-like domain</keyword>
<keyword id="KW-0325">Glycoprotein</keyword>
<keyword id="KW-0339">Growth factor</keyword>
<keyword id="KW-1043">Host membrane</keyword>
<keyword id="KW-0945">Host-virus interaction</keyword>
<keyword id="KW-0472">Membrane</keyword>
<keyword id="KW-0964">Secreted</keyword>
<keyword id="KW-0732">Signal</keyword>
<keyword id="KW-0812">Transmembrane</keyword>
<keyword id="KW-1133">Transmembrane helix</keyword>
<comment type="function">
    <text evidence="1">Stimulates cellular proliferation (hyperplasia)and mobility around infected cells to promote rapid and efficient spread of infection. This effect is beneficial for virus replication in vivo, because poxviruses replicate possibly better in proliferating cells than in quiescent cells. Acts by binding host EGFR, inducing its dimerization, autophosphorylation and leading to activation of several cellular pathways regulating cell proliferation or cell survival. The activation by host EGFR of mitogen activated protein kinases (MAPK) and extracellular-signal regulated kinases (ERK) are essential for the positive effect of vaccinia growth factor on poxvirus virulence in vivo.</text>
</comment>
<comment type="subunit">
    <text evidence="1">Vaccinia growth factor interacts with host EGFR and promotes EGFR dimerization.</text>
</comment>
<comment type="subcellular location">
    <molecule>Pro-vaccinia growth factor</molecule>
    <subcellularLocation>
        <location evidence="1">Host membrane</location>
        <topology evidence="1">Single-pass type I membrane protein</topology>
    </subcellularLocation>
</comment>
<comment type="subcellular location">
    <molecule>Vaccinia growth factor</molecule>
    <subcellularLocation>
        <location evidence="1">Secreted</location>
    </subcellularLocation>
</comment>
<comment type="induction">
    <text evidence="1">Expressed in the early phase of the viral replicative cycle.</text>
</comment>
<comment type="similarity">
    <text evidence="4">Belongs to the orthopoxvirus OPG019 family.</text>
</comment>
<name>VGF_VACCT</name>
<feature type="signal peptide" evidence="2">
    <location>
        <begin position="1"/>
        <end position="18"/>
    </location>
</feature>
<feature type="chain" id="PRO_0000007598" description="Pro-vaccinia growth factor">
    <location>
        <begin position="19"/>
        <end position="140"/>
    </location>
</feature>
<feature type="chain" id="PRO_0000412917" description="Vaccinia growth factor" evidence="2">
    <location>
        <begin position="19"/>
        <end position="96"/>
    </location>
</feature>
<feature type="topological domain" description="Extracellular" evidence="2">
    <location>
        <begin position="19"/>
        <end position="100"/>
    </location>
</feature>
<feature type="transmembrane region" description="Helical" evidence="2">
    <location>
        <begin position="101"/>
        <end position="121"/>
    </location>
</feature>
<feature type="topological domain" description="Cytoplasmic" evidence="2">
    <location>
        <begin position="122"/>
        <end position="140"/>
    </location>
</feature>
<feature type="domain" description="EGF-like" evidence="3">
    <location>
        <begin position="41"/>
        <end position="81"/>
    </location>
</feature>
<feature type="site" description="Cleavage (By host protease)" evidence="2">
    <location>
        <begin position="96"/>
        <end position="97"/>
    </location>
</feature>
<feature type="glycosylation site" description="N-linked (GlcNAc...) asparagine; by host" evidence="2">
    <location>
        <position position="34"/>
    </location>
</feature>
<feature type="glycosylation site" description="N-linked (GlcNAc...) asparagine; by host" evidence="2">
    <location>
        <position position="95"/>
    </location>
</feature>
<feature type="disulfide bond" evidence="3">
    <location>
        <begin position="45"/>
        <end position="58"/>
    </location>
</feature>
<feature type="disulfide bond" evidence="3">
    <location>
        <begin position="53"/>
        <end position="69"/>
    </location>
</feature>
<feature type="disulfide bond" evidence="3">
    <location>
        <begin position="71"/>
        <end position="80"/>
    </location>
</feature>
<reference key="1">
    <citation type="submission" date="1998-09" db="EMBL/GenBank/DDBJ databases">
        <title>Complete genomic sequence of vaccinia virus (Tian Tan strain).</title>
        <authorList>
            <person name="Jin Q."/>
            <person name="Hou Y.D."/>
            <person name="Cheng N.H."/>
            <person name="Yao E.M."/>
            <person name="Cheng S.X."/>
            <person name="Yang X.K."/>
            <person name="Jing D.Y."/>
            <person name="Yu W.H."/>
            <person name="Yuan J.S."/>
            <person name="Ma X.J."/>
        </authorList>
    </citation>
    <scope>NUCLEOTIDE SEQUENCE [LARGE SCALE GENOMIC DNA]</scope>
</reference>
<proteinExistence type="inferred from homology"/>
<organism>
    <name type="scientific">Vaccinia virus (strain Tian Tan)</name>
    <name type="common">VACV</name>
    <dbReference type="NCBI Taxonomy" id="10253"/>
    <lineage>
        <taxon>Viruses</taxon>
        <taxon>Varidnaviria</taxon>
        <taxon>Bamfordvirae</taxon>
        <taxon>Nucleocytoviricota</taxon>
        <taxon>Pokkesviricetes</taxon>
        <taxon>Chitovirales</taxon>
        <taxon>Poxviridae</taxon>
        <taxon>Chordopoxvirinae</taxon>
        <taxon>Orthopoxvirus</taxon>
        <taxon>Vaccinia virus</taxon>
    </lineage>
</organism>
<evidence type="ECO:0000250" key="1">
    <source>
        <dbReference type="UniProtKB" id="P01136"/>
    </source>
</evidence>
<evidence type="ECO:0000255" key="2"/>
<evidence type="ECO:0000255" key="3">
    <source>
        <dbReference type="PROSITE-ProRule" id="PRU00076"/>
    </source>
</evidence>
<evidence type="ECO:0000305" key="4"/>
<sequence length="140" mass="15558">MLINYLMLLFAAMIIRSFADSGNAIETTLPEITNATTDIPAIRLCGPEGDGYCLHGDCIHARDIDGMYCRCSHGYTGIRCQHVVLVDYQRSEKPNTTTSYIPSPGIMLVLVGIIIITCCLLSVYRFTRRTKLPLQDMVVP</sequence>